<protein>
    <recommendedName>
        <fullName>Superoxide dismutase [Mn], mitochondrial</fullName>
        <ecNumber evidence="3">1.15.1.1</ecNumber>
    </recommendedName>
    <allergenName>Asp f 6</allergenName>
</protein>
<accession>Q92450</accession>
<accession>Q4WRZ6</accession>
<evidence type="ECO:0000250" key="1"/>
<evidence type="ECO:0000250" key="2">
    <source>
        <dbReference type="UniProtKB" id="P04179"/>
    </source>
</evidence>
<evidence type="ECO:0000250" key="3">
    <source>
        <dbReference type="UniProtKB" id="P0A0J3"/>
    </source>
</evidence>
<evidence type="ECO:0000250" key="4">
    <source>
        <dbReference type="UniProtKB" id="Q9UQX0"/>
    </source>
</evidence>
<evidence type="ECO:0000305" key="5"/>
<evidence type="ECO:0007829" key="6">
    <source>
        <dbReference type="PDB" id="1KKC"/>
    </source>
</evidence>
<organism>
    <name type="scientific">Aspergillus fumigatus (strain ATCC MYA-4609 / CBS 101355 / FGSC A1100 / Af293)</name>
    <name type="common">Neosartorya fumigata</name>
    <dbReference type="NCBI Taxonomy" id="330879"/>
    <lineage>
        <taxon>Eukaryota</taxon>
        <taxon>Fungi</taxon>
        <taxon>Dikarya</taxon>
        <taxon>Ascomycota</taxon>
        <taxon>Pezizomycotina</taxon>
        <taxon>Eurotiomycetes</taxon>
        <taxon>Eurotiomycetidae</taxon>
        <taxon>Eurotiales</taxon>
        <taxon>Aspergillaceae</taxon>
        <taxon>Aspergillus</taxon>
        <taxon>Aspergillus subgen. Fumigati</taxon>
    </lineage>
</organism>
<gene>
    <name type="primary">sodB</name>
    <name type="ORF">AFUA_1G14550</name>
</gene>
<proteinExistence type="evidence at protein level"/>
<reference key="1">
    <citation type="journal article" date="1996" name="J. Exp. Med.">
        <title>Humoral and cell-mediated autoimmunity in allergy to Aspergillus fumigatus.</title>
        <authorList>
            <person name="Crameri R."/>
            <person name="Faith A."/>
            <person name="Hemmann S."/>
            <person name="Jaussi R."/>
            <person name="Ismail C."/>
            <person name="Menz G."/>
            <person name="Blaser K."/>
        </authorList>
    </citation>
    <scope>NUCLEOTIDE SEQUENCE [MRNA]</scope>
    <source>
        <strain>ATCC 42202 / AF-102 / Ag 507</strain>
    </source>
</reference>
<reference key="2">
    <citation type="journal article" date="2005" name="Nature">
        <title>Genomic sequence of the pathogenic and allergenic filamentous fungus Aspergillus fumigatus.</title>
        <authorList>
            <person name="Nierman W.C."/>
            <person name="Pain A."/>
            <person name="Anderson M.J."/>
            <person name="Wortman J.R."/>
            <person name="Kim H.S."/>
            <person name="Arroyo J."/>
            <person name="Berriman M."/>
            <person name="Abe K."/>
            <person name="Archer D.B."/>
            <person name="Bermejo C."/>
            <person name="Bennett J.W."/>
            <person name="Bowyer P."/>
            <person name="Chen D."/>
            <person name="Collins M."/>
            <person name="Coulsen R."/>
            <person name="Davies R."/>
            <person name="Dyer P.S."/>
            <person name="Farman M.L."/>
            <person name="Fedorova N."/>
            <person name="Fedorova N.D."/>
            <person name="Feldblyum T.V."/>
            <person name="Fischer R."/>
            <person name="Fosker N."/>
            <person name="Fraser A."/>
            <person name="Garcia J.L."/>
            <person name="Garcia M.J."/>
            <person name="Goble A."/>
            <person name="Goldman G.H."/>
            <person name="Gomi K."/>
            <person name="Griffith-Jones S."/>
            <person name="Gwilliam R."/>
            <person name="Haas B.J."/>
            <person name="Haas H."/>
            <person name="Harris D.E."/>
            <person name="Horiuchi H."/>
            <person name="Huang J."/>
            <person name="Humphray S."/>
            <person name="Jimenez J."/>
            <person name="Keller N."/>
            <person name="Khouri H."/>
            <person name="Kitamoto K."/>
            <person name="Kobayashi T."/>
            <person name="Konzack S."/>
            <person name="Kulkarni R."/>
            <person name="Kumagai T."/>
            <person name="Lafton A."/>
            <person name="Latge J.-P."/>
            <person name="Li W."/>
            <person name="Lord A."/>
            <person name="Lu C."/>
            <person name="Majoros W.H."/>
            <person name="May G.S."/>
            <person name="Miller B.L."/>
            <person name="Mohamoud Y."/>
            <person name="Molina M."/>
            <person name="Monod M."/>
            <person name="Mouyna I."/>
            <person name="Mulligan S."/>
            <person name="Murphy L.D."/>
            <person name="O'Neil S."/>
            <person name="Paulsen I."/>
            <person name="Penalva M.A."/>
            <person name="Pertea M."/>
            <person name="Price C."/>
            <person name="Pritchard B.L."/>
            <person name="Quail M.A."/>
            <person name="Rabbinowitsch E."/>
            <person name="Rawlins N."/>
            <person name="Rajandream M.A."/>
            <person name="Reichard U."/>
            <person name="Renauld H."/>
            <person name="Robson G.D."/>
            <person name="Rodriguez de Cordoba S."/>
            <person name="Rodriguez-Pena J.M."/>
            <person name="Ronning C.M."/>
            <person name="Rutter S."/>
            <person name="Salzberg S.L."/>
            <person name="Sanchez M."/>
            <person name="Sanchez-Ferrero J.C."/>
            <person name="Saunders D."/>
            <person name="Seeger K."/>
            <person name="Squares R."/>
            <person name="Squares S."/>
            <person name="Takeuchi M."/>
            <person name="Tekaia F."/>
            <person name="Turner G."/>
            <person name="Vazquez de Aldana C.R."/>
            <person name="Weidman J."/>
            <person name="White O."/>
            <person name="Woodward J.R."/>
            <person name="Yu J.-H."/>
            <person name="Fraser C.M."/>
            <person name="Galagan J.E."/>
            <person name="Asai K."/>
            <person name="Machida M."/>
            <person name="Hall N."/>
            <person name="Barrell B.G."/>
            <person name="Denning D.W."/>
        </authorList>
    </citation>
    <scope>NUCLEOTIDE SEQUENCE [LARGE SCALE GENOMIC DNA]</scope>
    <source>
        <strain>ATCC MYA-4609 / CBS 101355 / FGSC A1100 / Af293</strain>
    </source>
</reference>
<reference key="3">
    <citation type="journal article" date="2002" name="J. Immunol.">
        <title>Comparison of the crystal structures of the human manganese superoxide dismutase and the homologous Aspergillus fumigatus allergen at 2-A resolution.</title>
        <authorList>
            <person name="Flueckiger S."/>
            <person name="Mittl P.R.E."/>
            <person name="Scapozza L."/>
            <person name="Fijten H."/>
            <person name="Folkers G."/>
            <person name="Gruetter M.G."/>
            <person name="Blaser K."/>
            <person name="Crameri R."/>
        </authorList>
    </citation>
    <scope>X-RAY CRYSTALLOGRAPHY (2.0 ANGSTROMS)</scope>
</reference>
<keyword id="KW-0002">3D-structure</keyword>
<keyword id="KW-0020">Allergen</keyword>
<keyword id="KW-0049">Antioxidant</keyword>
<keyword id="KW-0464">Manganese</keyword>
<keyword id="KW-0479">Metal-binding</keyword>
<keyword id="KW-0496">Mitochondrion</keyword>
<keyword id="KW-0560">Oxidoreductase</keyword>
<keyword id="KW-1185">Reference proteome</keyword>
<keyword id="KW-0809">Transit peptide</keyword>
<feature type="transit peptide" description="Mitochondrion" evidence="1">
    <location>
        <begin position="1"/>
        <end status="unknown"/>
    </location>
</feature>
<feature type="chain" id="PRO_0000032881" description="Superoxide dismutase [Mn], mitochondrial">
    <location>
        <begin status="unknown"/>
        <end position="210"/>
    </location>
</feature>
<feature type="binding site" evidence="2">
    <location>
        <position position="29"/>
    </location>
    <ligand>
        <name>Mn(2+)</name>
        <dbReference type="ChEBI" id="CHEBI:29035"/>
    </ligand>
</feature>
<feature type="binding site" evidence="2">
    <location>
        <position position="77"/>
    </location>
    <ligand>
        <name>Mn(2+)</name>
        <dbReference type="ChEBI" id="CHEBI:29035"/>
    </ligand>
</feature>
<feature type="binding site" evidence="2">
    <location>
        <position position="163"/>
    </location>
    <ligand>
        <name>Mn(2+)</name>
        <dbReference type="ChEBI" id="CHEBI:29035"/>
    </ligand>
</feature>
<feature type="binding site" evidence="2">
    <location>
        <position position="167"/>
    </location>
    <ligand>
        <name>Mn(2+)</name>
        <dbReference type="ChEBI" id="CHEBI:29035"/>
    </ligand>
</feature>
<feature type="sequence conflict" description="In Ref. 1; AAB60779." evidence="5" ref="1">
    <original>N</original>
    <variation>T</variation>
    <location>
        <position position="55"/>
    </location>
</feature>
<feature type="turn" evidence="6">
    <location>
        <begin position="14"/>
        <end position="20"/>
    </location>
</feature>
<feature type="helix" evidence="6">
    <location>
        <begin position="23"/>
        <end position="31"/>
    </location>
</feature>
<feature type="helix" evidence="6">
    <location>
        <begin position="33"/>
        <end position="53"/>
    </location>
</feature>
<feature type="helix" evidence="6">
    <location>
        <begin position="57"/>
        <end position="82"/>
    </location>
</feature>
<feature type="helix" evidence="6">
    <location>
        <begin position="87"/>
        <end position="89"/>
    </location>
</feature>
<feature type="helix" evidence="6">
    <location>
        <begin position="94"/>
        <end position="96"/>
    </location>
</feature>
<feature type="helix" evidence="6">
    <location>
        <begin position="98"/>
        <end position="108"/>
    </location>
</feature>
<feature type="helix" evidence="6">
    <location>
        <begin position="111"/>
        <end position="124"/>
    </location>
</feature>
<feature type="strand" evidence="6">
    <location>
        <begin position="127"/>
        <end position="137"/>
    </location>
</feature>
<feature type="strand" evidence="6">
    <location>
        <begin position="142"/>
        <end position="148"/>
    </location>
</feature>
<feature type="strand" evidence="6">
    <location>
        <begin position="155"/>
        <end position="163"/>
    </location>
</feature>
<feature type="helix" evidence="6">
    <location>
        <begin position="166"/>
        <end position="168"/>
    </location>
</feature>
<feature type="helix" evidence="6">
    <location>
        <begin position="170"/>
        <end position="173"/>
    </location>
</feature>
<feature type="helix" evidence="6">
    <location>
        <begin position="177"/>
        <end position="184"/>
    </location>
</feature>
<feature type="helix" evidence="6">
    <location>
        <begin position="185"/>
        <end position="187"/>
    </location>
</feature>
<feature type="helix" evidence="6">
    <location>
        <begin position="190"/>
        <end position="199"/>
    </location>
</feature>
<comment type="function">
    <text evidence="2">Destroys superoxide anion radicals which are normally produced within the cells and which are toxic to biological systems.</text>
</comment>
<comment type="catalytic activity">
    <reaction evidence="3">
        <text>2 superoxide + 2 H(+) = H2O2 + O2</text>
        <dbReference type="Rhea" id="RHEA:20696"/>
        <dbReference type="ChEBI" id="CHEBI:15378"/>
        <dbReference type="ChEBI" id="CHEBI:15379"/>
        <dbReference type="ChEBI" id="CHEBI:16240"/>
        <dbReference type="ChEBI" id="CHEBI:18421"/>
        <dbReference type="EC" id="1.15.1.1"/>
    </reaction>
</comment>
<comment type="cofactor">
    <cofactor evidence="4">
        <name>Mn(2+)</name>
        <dbReference type="ChEBI" id="CHEBI:29035"/>
    </cofactor>
    <text evidence="4">Binds 1 Mn(2+) ion per subunit.</text>
</comment>
<comment type="subunit">
    <text evidence="2">Homotetramer.</text>
</comment>
<comment type="subcellular location">
    <subcellularLocation>
        <location evidence="4">Mitochondrion matrix</location>
    </subcellularLocation>
</comment>
<comment type="allergen">
    <text>Causes an allergic reaction in human.</text>
</comment>
<comment type="similarity">
    <text evidence="5">Belongs to the iron/manganese superoxide dismutase family.</text>
</comment>
<comment type="sequence caution" evidence="5">
    <conflict type="erroneous initiation">
        <sequence resource="EMBL-CDS" id="AAB60779"/>
    </conflict>
</comment>
<sequence length="210" mass="23390">MSQQYTLPPLPYPYDALQPYISQQIMELHHKKHHQTYVNGLNAALEAQKKAAEANDVPKLVSVQQAIKFNGGGHINHSLFWKNLAPEKSGGGKIDQAPVLKAAIEQRWGSFDKFKDAFNTTLLGIQGSGWGWLVTDGPKGKLDITTTHDQDPVTGAAPVFGVDMWEHAYYLQYLNDKASYAKGIWNVINWAEAENRYIAGDKGGHPFMKL</sequence>
<name>SODM_ASPFU</name>
<dbReference type="EC" id="1.15.1.1" evidence="3"/>
<dbReference type="EMBL" id="U53561">
    <property type="protein sequence ID" value="AAB60779.1"/>
    <property type="status" value="ALT_INIT"/>
    <property type="molecule type" value="mRNA"/>
</dbReference>
<dbReference type="EMBL" id="AAHF01000004">
    <property type="protein sequence ID" value="EAL90786.1"/>
    <property type="molecule type" value="Genomic_DNA"/>
</dbReference>
<dbReference type="RefSeq" id="XP_752824.1">
    <property type="nucleotide sequence ID" value="XM_747731.1"/>
</dbReference>
<dbReference type="PDB" id="1KKC">
    <property type="method" value="X-ray"/>
    <property type="resolution" value="2.00 A"/>
    <property type="chains" value="A/B/X/Y=1-210"/>
</dbReference>
<dbReference type="PDBsum" id="1KKC"/>
<dbReference type="SMR" id="Q92450"/>
<dbReference type="STRING" id="330879.Q92450"/>
<dbReference type="Allergome" id="3124">
    <property type="allergen name" value="Asp f 6.0101"/>
</dbReference>
<dbReference type="Allergome" id="76">
    <property type="allergen name" value="Asp f 6"/>
</dbReference>
<dbReference type="EnsemblFungi" id="EAL90786">
    <property type="protein sequence ID" value="EAL90786"/>
    <property type="gene ID" value="AFUA_1G14550"/>
</dbReference>
<dbReference type="GeneID" id="3509846"/>
<dbReference type="KEGG" id="afm:AFUA_1G14550"/>
<dbReference type="VEuPathDB" id="FungiDB:Afu1g14550"/>
<dbReference type="eggNOG" id="KOG0876">
    <property type="taxonomic scope" value="Eukaryota"/>
</dbReference>
<dbReference type="HOGENOM" id="CLU_031625_2_0_1"/>
<dbReference type="InParanoid" id="Q92450"/>
<dbReference type="OMA" id="GSYEGWK"/>
<dbReference type="OrthoDB" id="239262at2759"/>
<dbReference type="EvolutionaryTrace" id="Q92450"/>
<dbReference type="Proteomes" id="UP000002530">
    <property type="component" value="Chromosome 1"/>
</dbReference>
<dbReference type="GO" id="GO:0005759">
    <property type="term" value="C:mitochondrial matrix"/>
    <property type="evidence" value="ECO:0007669"/>
    <property type="project" value="UniProtKB-SubCell"/>
</dbReference>
<dbReference type="GO" id="GO:0005739">
    <property type="term" value="C:mitochondrion"/>
    <property type="evidence" value="ECO:0000318"/>
    <property type="project" value="GO_Central"/>
</dbReference>
<dbReference type="GO" id="GO:0019863">
    <property type="term" value="F:IgE binding"/>
    <property type="evidence" value="ECO:0000314"/>
    <property type="project" value="AspGD"/>
</dbReference>
<dbReference type="GO" id="GO:0030145">
    <property type="term" value="F:manganese ion binding"/>
    <property type="evidence" value="ECO:0000314"/>
    <property type="project" value="AspGD"/>
</dbReference>
<dbReference type="GO" id="GO:0004784">
    <property type="term" value="F:superoxide dismutase activity"/>
    <property type="evidence" value="ECO:0000318"/>
    <property type="project" value="GO_Central"/>
</dbReference>
<dbReference type="FunFam" id="1.10.287.990:FF:000001">
    <property type="entry name" value="Superoxide dismutase"/>
    <property type="match status" value="1"/>
</dbReference>
<dbReference type="FunFam" id="3.55.40.20:FF:000004">
    <property type="entry name" value="Superoxide dismutase [Fe]"/>
    <property type="match status" value="1"/>
</dbReference>
<dbReference type="Gene3D" id="1.10.287.990">
    <property type="entry name" value="Fe,Mn superoxide dismutase (SOD) domain"/>
    <property type="match status" value="1"/>
</dbReference>
<dbReference type="Gene3D" id="3.55.40.20">
    <property type="entry name" value="Iron/manganese superoxide dismutase, C-terminal domain"/>
    <property type="match status" value="1"/>
</dbReference>
<dbReference type="InterPro" id="IPR050265">
    <property type="entry name" value="Fe/Mn_Superoxide_Dismutase"/>
</dbReference>
<dbReference type="InterPro" id="IPR001189">
    <property type="entry name" value="Mn/Fe_SOD"/>
</dbReference>
<dbReference type="InterPro" id="IPR019833">
    <property type="entry name" value="Mn/Fe_SOD_BS"/>
</dbReference>
<dbReference type="InterPro" id="IPR019832">
    <property type="entry name" value="Mn/Fe_SOD_C"/>
</dbReference>
<dbReference type="InterPro" id="IPR019831">
    <property type="entry name" value="Mn/Fe_SOD_N"/>
</dbReference>
<dbReference type="InterPro" id="IPR036324">
    <property type="entry name" value="Mn/Fe_SOD_N_sf"/>
</dbReference>
<dbReference type="InterPro" id="IPR036314">
    <property type="entry name" value="SOD_C_sf"/>
</dbReference>
<dbReference type="PANTHER" id="PTHR11404:SF29">
    <property type="entry name" value="SUPEROXIDE DISMUTASE"/>
    <property type="match status" value="1"/>
</dbReference>
<dbReference type="PANTHER" id="PTHR11404">
    <property type="entry name" value="SUPEROXIDE DISMUTASE 2"/>
    <property type="match status" value="1"/>
</dbReference>
<dbReference type="Pfam" id="PF02777">
    <property type="entry name" value="Sod_Fe_C"/>
    <property type="match status" value="1"/>
</dbReference>
<dbReference type="Pfam" id="PF00081">
    <property type="entry name" value="Sod_Fe_N"/>
    <property type="match status" value="1"/>
</dbReference>
<dbReference type="PIRSF" id="PIRSF000349">
    <property type="entry name" value="SODismutase"/>
    <property type="match status" value="1"/>
</dbReference>
<dbReference type="PRINTS" id="PR01703">
    <property type="entry name" value="MNSODISMTASE"/>
</dbReference>
<dbReference type="SUPFAM" id="SSF54719">
    <property type="entry name" value="Fe,Mn superoxide dismutase (SOD), C-terminal domain"/>
    <property type="match status" value="1"/>
</dbReference>
<dbReference type="SUPFAM" id="SSF46609">
    <property type="entry name" value="Fe,Mn superoxide dismutase (SOD), N-terminal domain"/>
    <property type="match status" value="1"/>
</dbReference>
<dbReference type="PROSITE" id="PS00088">
    <property type="entry name" value="SOD_MN"/>
    <property type="match status" value="1"/>
</dbReference>